<comment type="function">
    <text evidence="1">Redox regulated molecular chaperone. Protects both thermally unfolding and oxidatively damaged proteins from irreversible aggregation. Plays an important role in the bacterial defense system toward oxidative stress.</text>
</comment>
<comment type="subcellular location">
    <subcellularLocation>
        <location evidence="1">Cytoplasm</location>
    </subcellularLocation>
</comment>
<comment type="PTM">
    <text evidence="1">Under oxidizing conditions two disulfide bonds are formed involving the reactive cysteines. Under reducing conditions zinc is bound to the reactive cysteines and the protein is inactive.</text>
</comment>
<comment type="similarity">
    <text evidence="1">Belongs to the HSP33 family.</text>
</comment>
<dbReference type="EMBL" id="CP001396">
    <property type="protein sequence ID" value="ACR63403.1"/>
    <property type="molecule type" value="Genomic_DNA"/>
</dbReference>
<dbReference type="RefSeq" id="WP_001135574.1">
    <property type="nucleotide sequence ID" value="NC_012759.1"/>
</dbReference>
<dbReference type="SMR" id="C4ZUQ6"/>
<dbReference type="GeneID" id="93778597"/>
<dbReference type="KEGG" id="ebw:BWG_3092"/>
<dbReference type="HOGENOM" id="CLU_054493_0_0_6"/>
<dbReference type="GO" id="GO:0005737">
    <property type="term" value="C:cytoplasm"/>
    <property type="evidence" value="ECO:0007669"/>
    <property type="project" value="UniProtKB-SubCell"/>
</dbReference>
<dbReference type="GO" id="GO:0044183">
    <property type="term" value="F:protein folding chaperone"/>
    <property type="evidence" value="ECO:0007669"/>
    <property type="project" value="TreeGrafter"/>
</dbReference>
<dbReference type="GO" id="GO:0051082">
    <property type="term" value="F:unfolded protein binding"/>
    <property type="evidence" value="ECO:0007669"/>
    <property type="project" value="UniProtKB-UniRule"/>
</dbReference>
<dbReference type="GO" id="GO:0042026">
    <property type="term" value="P:protein refolding"/>
    <property type="evidence" value="ECO:0007669"/>
    <property type="project" value="TreeGrafter"/>
</dbReference>
<dbReference type="CDD" id="cd00498">
    <property type="entry name" value="Hsp33"/>
    <property type="match status" value="1"/>
</dbReference>
<dbReference type="FunFam" id="3.55.30.10:FF:000001">
    <property type="entry name" value="33 kDa chaperonin"/>
    <property type="match status" value="1"/>
</dbReference>
<dbReference type="Gene3D" id="1.10.287.480">
    <property type="entry name" value="helix hairpin bin"/>
    <property type="match status" value="1"/>
</dbReference>
<dbReference type="Gene3D" id="3.55.30.10">
    <property type="entry name" value="Hsp33 domain"/>
    <property type="match status" value="1"/>
</dbReference>
<dbReference type="Gene3D" id="3.90.1280.10">
    <property type="entry name" value="HSP33 redox switch-like"/>
    <property type="match status" value="1"/>
</dbReference>
<dbReference type="HAMAP" id="MF_00117">
    <property type="entry name" value="HslO"/>
    <property type="match status" value="1"/>
</dbReference>
<dbReference type="InterPro" id="IPR000397">
    <property type="entry name" value="Heat_shock_Hsp33"/>
</dbReference>
<dbReference type="InterPro" id="IPR016154">
    <property type="entry name" value="Heat_shock_Hsp33_C"/>
</dbReference>
<dbReference type="InterPro" id="IPR016153">
    <property type="entry name" value="Heat_shock_Hsp33_N"/>
</dbReference>
<dbReference type="InterPro" id="IPR023212">
    <property type="entry name" value="Hsp33_helix_hairpin_bin_dom_sf"/>
</dbReference>
<dbReference type="NCBIfam" id="NF001033">
    <property type="entry name" value="PRK00114.1"/>
    <property type="match status" value="1"/>
</dbReference>
<dbReference type="PANTHER" id="PTHR30111">
    <property type="entry name" value="33 KDA CHAPERONIN"/>
    <property type="match status" value="1"/>
</dbReference>
<dbReference type="PANTHER" id="PTHR30111:SF1">
    <property type="entry name" value="33 KDA CHAPERONIN"/>
    <property type="match status" value="1"/>
</dbReference>
<dbReference type="Pfam" id="PF01430">
    <property type="entry name" value="HSP33"/>
    <property type="match status" value="1"/>
</dbReference>
<dbReference type="PIRSF" id="PIRSF005261">
    <property type="entry name" value="Heat_shock_Hsp33"/>
    <property type="match status" value="1"/>
</dbReference>
<dbReference type="SUPFAM" id="SSF64397">
    <property type="entry name" value="Hsp33 domain"/>
    <property type="match status" value="1"/>
</dbReference>
<dbReference type="SUPFAM" id="SSF118352">
    <property type="entry name" value="HSP33 redox switch-like"/>
    <property type="match status" value="1"/>
</dbReference>
<keyword id="KW-0143">Chaperone</keyword>
<keyword id="KW-0963">Cytoplasm</keyword>
<keyword id="KW-1015">Disulfide bond</keyword>
<keyword id="KW-0676">Redox-active center</keyword>
<keyword id="KW-0346">Stress response</keyword>
<keyword id="KW-0862">Zinc</keyword>
<feature type="chain" id="PRO_1000202994" description="33 kDa chaperonin">
    <location>
        <begin position="1"/>
        <end position="292"/>
    </location>
</feature>
<feature type="disulfide bond" description="Redox-active" evidence="1">
    <location>
        <begin position="230"/>
        <end position="232"/>
    </location>
</feature>
<feature type="disulfide bond" description="Redox-active" evidence="1">
    <location>
        <begin position="263"/>
        <end position="266"/>
    </location>
</feature>
<name>HSLO_ECOBW</name>
<protein>
    <recommendedName>
        <fullName evidence="1">33 kDa chaperonin</fullName>
    </recommendedName>
    <alternativeName>
        <fullName evidence="1">Heat shock protein 33 homolog</fullName>
        <shortName evidence="1">HSP33</shortName>
    </alternativeName>
</protein>
<gene>
    <name evidence="1" type="primary">hslO</name>
    <name type="ordered locus">BWG_3092</name>
</gene>
<proteinExistence type="inferred from homology"/>
<reference key="1">
    <citation type="journal article" date="2009" name="J. Bacteriol.">
        <title>Genomic sequencing reveals regulatory mutations and recombinational events in the widely used MC4100 lineage of Escherichia coli K-12.</title>
        <authorList>
            <person name="Ferenci T."/>
            <person name="Zhou Z."/>
            <person name="Betteridge T."/>
            <person name="Ren Y."/>
            <person name="Liu Y."/>
            <person name="Feng L."/>
            <person name="Reeves P.R."/>
            <person name="Wang L."/>
        </authorList>
    </citation>
    <scope>NUCLEOTIDE SEQUENCE [LARGE SCALE GENOMIC DNA]</scope>
    <source>
        <strain>K12 / MC4100 / BW2952</strain>
    </source>
</reference>
<accession>C4ZUQ6</accession>
<evidence type="ECO:0000255" key="1">
    <source>
        <dbReference type="HAMAP-Rule" id="MF_00117"/>
    </source>
</evidence>
<sequence>MPQHDQLHRYLFENFAVRGELVTVSETLQQILENHDYPQPVKNVLAELLVATSLLTATLKFDGDITVQLQGDGPMNLAVINGNNNQQMRGVARVQGEIPENADLKTLVGNGYVVITITPSEGERYQGVVGLEGDTLAACLEDYFMRSEQLPTRLFIRTGDVDGKPAAGGMLLQVMPAQNAQQDDFDHLATLTETIKTEELLTLPANEVLWRLYHEEEVTVYDPQDVEFKCTCSRERCADALKTLPDEEVDSILAEDGEIDMHCDYCGNHYLFNAMDIAEIRNNASPADPQVH</sequence>
<organism>
    <name type="scientific">Escherichia coli (strain K12 / MC4100 / BW2952)</name>
    <dbReference type="NCBI Taxonomy" id="595496"/>
    <lineage>
        <taxon>Bacteria</taxon>
        <taxon>Pseudomonadati</taxon>
        <taxon>Pseudomonadota</taxon>
        <taxon>Gammaproteobacteria</taxon>
        <taxon>Enterobacterales</taxon>
        <taxon>Enterobacteriaceae</taxon>
        <taxon>Escherichia</taxon>
    </lineage>
</organism>